<name>PG166_VAR67</name>
<feature type="chain" id="PRO_0000099326" description="Protein OPG166">
    <location>
        <begin position="1"/>
        <end position="277"/>
    </location>
</feature>
<feature type="transmembrane region" description="Helical" evidence="2">
    <location>
        <begin position="124"/>
        <end position="144"/>
    </location>
</feature>
<feature type="transmembrane region" description="Helical" evidence="2">
    <location>
        <begin position="156"/>
        <end position="176"/>
    </location>
</feature>
<feature type="transmembrane region" description="Helical" evidence="2">
    <location>
        <begin position="186"/>
        <end position="206"/>
    </location>
</feature>
<feature type="transmembrane region" description="Helical" evidence="2">
    <location>
        <begin position="219"/>
        <end position="239"/>
    </location>
</feature>
<feature type="transmembrane region" description="Helical" evidence="2">
    <location>
        <begin position="247"/>
        <end position="267"/>
    </location>
</feature>
<feature type="glycosylation site" description="N-linked (GlcNAc...) asparagine; by host" evidence="2">
    <location>
        <position position="29"/>
    </location>
</feature>
<feature type="glycosylation site" description="N-linked (GlcNAc...) asparagine; by host" evidence="2">
    <location>
        <position position="58"/>
    </location>
</feature>
<proteinExistence type="inferred from homology"/>
<keyword id="KW-0325">Glycoprotein</keyword>
<keyword id="KW-1043">Host membrane</keyword>
<keyword id="KW-0472">Membrane</keyword>
<keyword id="KW-1185">Reference proteome</keyword>
<keyword id="KW-0812">Transmembrane</keyword>
<keyword id="KW-1133">Transmembrane helix</keyword>
<gene>
    <name type="primary">OPG166</name>
    <name type="ORF">A38L</name>
    <name type="ORF">A41L</name>
</gene>
<organism>
    <name type="scientific">Variola virus (isolate Human/India/Ind3/1967)</name>
    <name type="common">VARV</name>
    <name type="synonym">Smallpox virus</name>
    <dbReference type="NCBI Taxonomy" id="587200"/>
    <lineage>
        <taxon>Viruses</taxon>
        <taxon>Varidnaviria</taxon>
        <taxon>Bamfordvirae</taxon>
        <taxon>Nucleocytoviricota</taxon>
        <taxon>Pokkesviricetes</taxon>
        <taxon>Chitovirales</taxon>
        <taxon>Poxviridae</taxon>
        <taxon>Chordopoxvirinae</taxon>
        <taxon>Orthopoxvirus</taxon>
        <taxon>Variola virus</taxon>
    </lineage>
</organism>
<accession>P0DST5</accession>
<accession>P33853</accession>
<protein>
    <recommendedName>
        <fullName>Protein OPG166</fullName>
    </recommendedName>
</protein>
<dbReference type="EMBL" id="X69198">
    <property type="protein sequence ID" value="CAA49088.1"/>
    <property type="molecule type" value="Genomic_DNA"/>
</dbReference>
<dbReference type="PIR" id="F36852">
    <property type="entry name" value="F36852"/>
</dbReference>
<dbReference type="RefSeq" id="NP_042191.1">
    <property type="nucleotide sequence ID" value="NC_001611.1"/>
</dbReference>
<dbReference type="SMR" id="P0DST5"/>
<dbReference type="GeneID" id="1486522"/>
<dbReference type="KEGG" id="vg:1486522"/>
<dbReference type="Proteomes" id="UP000002060">
    <property type="component" value="Segment"/>
</dbReference>
<dbReference type="GO" id="GO:0070062">
    <property type="term" value="C:extracellular exosome"/>
    <property type="evidence" value="ECO:0007669"/>
    <property type="project" value="TreeGrafter"/>
</dbReference>
<dbReference type="GO" id="GO:0033644">
    <property type="term" value="C:host cell membrane"/>
    <property type="evidence" value="ECO:0007669"/>
    <property type="project" value="UniProtKB-SubCell"/>
</dbReference>
<dbReference type="GO" id="GO:0005886">
    <property type="term" value="C:plasma membrane"/>
    <property type="evidence" value="ECO:0007669"/>
    <property type="project" value="InterPro"/>
</dbReference>
<dbReference type="GO" id="GO:0070053">
    <property type="term" value="F:thrombospondin receptor activity"/>
    <property type="evidence" value="ECO:0007669"/>
    <property type="project" value="InterPro"/>
</dbReference>
<dbReference type="GO" id="GO:0022409">
    <property type="term" value="P:positive regulation of cell-cell adhesion"/>
    <property type="evidence" value="ECO:0007669"/>
    <property type="project" value="InterPro"/>
</dbReference>
<dbReference type="GO" id="GO:0050729">
    <property type="term" value="P:positive regulation of inflammatory response"/>
    <property type="evidence" value="ECO:0007669"/>
    <property type="project" value="InterPro"/>
</dbReference>
<dbReference type="GO" id="GO:0050766">
    <property type="term" value="P:positive regulation of phagocytosis"/>
    <property type="evidence" value="ECO:0007669"/>
    <property type="project" value="InterPro"/>
</dbReference>
<dbReference type="Gene3D" id="2.60.40.10">
    <property type="entry name" value="Immunoglobulins"/>
    <property type="match status" value="1"/>
</dbReference>
<dbReference type="InterPro" id="IPR006704">
    <property type="entry name" value="CD47"/>
</dbReference>
<dbReference type="InterPro" id="IPR013147">
    <property type="entry name" value="CD47-like_TM"/>
</dbReference>
<dbReference type="InterPro" id="IPR013270">
    <property type="entry name" value="CD47_Vset"/>
</dbReference>
<dbReference type="InterPro" id="IPR013783">
    <property type="entry name" value="Ig-like_fold"/>
</dbReference>
<dbReference type="PANTHER" id="PTHR10613">
    <property type="entry name" value="LEUKOCYTE SURFACE ANTIGEN CD47"/>
    <property type="match status" value="1"/>
</dbReference>
<dbReference type="PANTHER" id="PTHR10613:SF0">
    <property type="entry name" value="LEUKOCYTE SURFACE ANTIGEN CD47"/>
    <property type="match status" value="1"/>
</dbReference>
<dbReference type="Pfam" id="PF04549">
    <property type="entry name" value="CD47"/>
    <property type="match status" value="1"/>
</dbReference>
<dbReference type="Pfam" id="PF08204">
    <property type="entry name" value="V-set_CD47"/>
    <property type="match status" value="1"/>
</dbReference>
<reference key="1">
    <citation type="journal article" date="1993" name="FEBS Lett.">
        <title>Genes of variola and vaccinia viruses necessary to overcome the host protective mechanisms.</title>
        <authorList>
            <person name="Shchelkunov S.N."/>
            <person name="Blinov V.M."/>
            <person name="Sandakhchiev L.S."/>
        </authorList>
    </citation>
    <scope>NUCLEOTIDE SEQUENCE [GENOMIC DNA]</scope>
</reference>
<sequence length="277" mass="31595">MLRVRILLIYLCTFVVITSTKTIEYTACNDTIIIPCTIDNPTKYIRWKLDNHNILTYNKTSKTIILSKWHTSAKLHSLSDNDVSLIIKYKDILPGTYTCEDNTGIKSTVKLVQRHTNWFNDHHTMLMFIFTGITLFLLFLEIAYTSISVVFSTNLGILQVFGCIIAMIELCGAFLFYPSMFTLRHIIGLLMMTLPSIFLIITKVFSFWLLCKLSCAVHLIIYYQLAGYILTVLGLGLSLKECVDGTLLLSGLGTIMVSEHFSLLFLVCFPSTQRDYY</sequence>
<evidence type="ECO:0000250" key="1">
    <source>
        <dbReference type="UniProtKB" id="P24763"/>
    </source>
</evidence>
<evidence type="ECO:0000255" key="2"/>
<evidence type="ECO:0000305" key="3"/>
<comment type="function">
    <text evidence="1">Promotes, when overexpressed, the influx of extracellular Ca(2+), leading to membrane permeability and host cell necrosis.</text>
</comment>
<comment type="subcellular location">
    <subcellularLocation>
        <location evidence="1">Host membrane</location>
        <topology evidence="1">Multi-pass membrane protein</topology>
    </subcellularLocation>
</comment>
<comment type="similarity">
    <text evidence="3">Belongs to the orthopoxvirus OPG166 protein family.</text>
</comment>
<organismHost>
    <name type="scientific">Homo sapiens</name>
    <name type="common">Human</name>
    <dbReference type="NCBI Taxonomy" id="9606"/>
</organismHost>